<name>CLPX_TRIL1</name>
<accession>B3E1Z3</accession>
<reference key="1">
    <citation type="submission" date="2008-05" db="EMBL/GenBank/DDBJ databases">
        <title>Complete sequence of chromosome of Geobacter lovleyi SZ.</title>
        <authorList>
            <consortium name="US DOE Joint Genome Institute"/>
            <person name="Lucas S."/>
            <person name="Copeland A."/>
            <person name="Lapidus A."/>
            <person name="Glavina del Rio T."/>
            <person name="Dalin E."/>
            <person name="Tice H."/>
            <person name="Bruce D."/>
            <person name="Goodwin L."/>
            <person name="Pitluck S."/>
            <person name="Chertkov O."/>
            <person name="Meincke L."/>
            <person name="Brettin T."/>
            <person name="Detter J.C."/>
            <person name="Han C."/>
            <person name="Tapia R."/>
            <person name="Kuske C.R."/>
            <person name="Schmutz J."/>
            <person name="Larimer F."/>
            <person name="Land M."/>
            <person name="Hauser L."/>
            <person name="Kyrpides N."/>
            <person name="Mikhailova N."/>
            <person name="Sung Y."/>
            <person name="Fletcher K.E."/>
            <person name="Ritalahti K.M."/>
            <person name="Loeffler F.E."/>
            <person name="Richardson P."/>
        </authorList>
    </citation>
    <scope>NUCLEOTIDE SEQUENCE [LARGE SCALE GENOMIC DNA]</scope>
    <source>
        <strain>ATCC BAA-1151 / DSM 17278 / SZ</strain>
    </source>
</reference>
<comment type="function">
    <text evidence="1">ATP-dependent specificity component of the Clp protease. It directs the protease to specific substrates. Can perform chaperone functions in the absence of ClpP.</text>
</comment>
<comment type="subunit">
    <text evidence="1">Component of the ClpX-ClpP complex. Forms a hexameric ring that, in the presence of ATP, binds to fourteen ClpP subunits assembled into a disk-like structure with a central cavity, resembling the structure of eukaryotic proteasomes.</text>
</comment>
<comment type="similarity">
    <text evidence="1">Belongs to the ClpX chaperone family.</text>
</comment>
<protein>
    <recommendedName>
        <fullName evidence="1">ATP-dependent Clp protease ATP-binding subunit ClpX</fullName>
    </recommendedName>
</protein>
<keyword id="KW-0067">ATP-binding</keyword>
<keyword id="KW-0143">Chaperone</keyword>
<keyword id="KW-0479">Metal-binding</keyword>
<keyword id="KW-0547">Nucleotide-binding</keyword>
<keyword id="KW-1185">Reference proteome</keyword>
<keyword id="KW-0862">Zinc</keyword>
<organism>
    <name type="scientific">Trichlorobacter lovleyi (strain ATCC BAA-1151 / DSM 17278 / SZ)</name>
    <name type="common">Geobacter lovleyi</name>
    <dbReference type="NCBI Taxonomy" id="398767"/>
    <lineage>
        <taxon>Bacteria</taxon>
        <taxon>Pseudomonadati</taxon>
        <taxon>Thermodesulfobacteriota</taxon>
        <taxon>Desulfuromonadia</taxon>
        <taxon>Geobacterales</taxon>
        <taxon>Geobacteraceae</taxon>
        <taxon>Trichlorobacter</taxon>
    </lineage>
</organism>
<evidence type="ECO:0000255" key="1">
    <source>
        <dbReference type="HAMAP-Rule" id="MF_00175"/>
    </source>
</evidence>
<evidence type="ECO:0000255" key="2">
    <source>
        <dbReference type="PROSITE-ProRule" id="PRU01250"/>
    </source>
</evidence>
<dbReference type="EMBL" id="CP001089">
    <property type="protein sequence ID" value="ACD95643.1"/>
    <property type="molecule type" value="Genomic_DNA"/>
</dbReference>
<dbReference type="RefSeq" id="WP_012469982.1">
    <property type="nucleotide sequence ID" value="NC_010814.1"/>
</dbReference>
<dbReference type="SMR" id="B3E1Z3"/>
<dbReference type="STRING" id="398767.Glov_1927"/>
<dbReference type="KEGG" id="glo:Glov_1927"/>
<dbReference type="eggNOG" id="COG1219">
    <property type="taxonomic scope" value="Bacteria"/>
</dbReference>
<dbReference type="HOGENOM" id="CLU_014218_8_2_7"/>
<dbReference type="OrthoDB" id="9804062at2"/>
<dbReference type="Proteomes" id="UP000002420">
    <property type="component" value="Chromosome"/>
</dbReference>
<dbReference type="GO" id="GO:0009376">
    <property type="term" value="C:HslUV protease complex"/>
    <property type="evidence" value="ECO:0007669"/>
    <property type="project" value="TreeGrafter"/>
</dbReference>
<dbReference type="GO" id="GO:0005524">
    <property type="term" value="F:ATP binding"/>
    <property type="evidence" value="ECO:0007669"/>
    <property type="project" value="UniProtKB-UniRule"/>
</dbReference>
<dbReference type="GO" id="GO:0016887">
    <property type="term" value="F:ATP hydrolysis activity"/>
    <property type="evidence" value="ECO:0007669"/>
    <property type="project" value="InterPro"/>
</dbReference>
<dbReference type="GO" id="GO:0140662">
    <property type="term" value="F:ATP-dependent protein folding chaperone"/>
    <property type="evidence" value="ECO:0007669"/>
    <property type="project" value="InterPro"/>
</dbReference>
<dbReference type="GO" id="GO:0046983">
    <property type="term" value="F:protein dimerization activity"/>
    <property type="evidence" value="ECO:0007669"/>
    <property type="project" value="InterPro"/>
</dbReference>
<dbReference type="GO" id="GO:0051082">
    <property type="term" value="F:unfolded protein binding"/>
    <property type="evidence" value="ECO:0007669"/>
    <property type="project" value="UniProtKB-UniRule"/>
</dbReference>
<dbReference type="GO" id="GO:0008270">
    <property type="term" value="F:zinc ion binding"/>
    <property type="evidence" value="ECO:0007669"/>
    <property type="project" value="InterPro"/>
</dbReference>
<dbReference type="GO" id="GO:0051301">
    <property type="term" value="P:cell division"/>
    <property type="evidence" value="ECO:0007669"/>
    <property type="project" value="TreeGrafter"/>
</dbReference>
<dbReference type="GO" id="GO:0051603">
    <property type="term" value="P:proteolysis involved in protein catabolic process"/>
    <property type="evidence" value="ECO:0007669"/>
    <property type="project" value="TreeGrafter"/>
</dbReference>
<dbReference type="CDD" id="cd19497">
    <property type="entry name" value="RecA-like_ClpX"/>
    <property type="match status" value="1"/>
</dbReference>
<dbReference type="FunFam" id="1.10.8.60:FF:000002">
    <property type="entry name" value="ATP-dependent Clp protease ATP-binding subunit ClpX"/>
    <property type="match status" value="1"/>
</dbReference>
<dbReference type="FunFam" id="3.40.50.300:FF:000005">
    <property type="entry name" value="ATP-dependent Clp protease ATP-binding subunit ClpX"/>
    <property type="match status" value="1"/>
</dbReference>
<dbReference type="Gene3D" id="1.10.8.60">
    <property type="match status" value="1"/>
</dbReference>
<dbReference type="Gene3D" id="6.20.220.10">
    <property type="entry name" value="ClpX chaperone, C4-type zinc finger domain"/>
    <property type="match status" value="1"/>
</dbReference>
<dbReference type="Gene3D" id="3.40.50.300">
    <property type="entry name" value="P-loop containing nucleotide triphosphate hydrolases"/>
    <property type="match status" value="1"/>
</dbReference>
<dbReference type="HAMAP" id="MF_00175">
    <property type="entry name" value="ClpX"/>
    <property type="match status" value="1"/>
</dbReference>
<dbReference type="InterPro" id="IPR003593">
    <property type="entry name" value="AAA+_ATPase"/>
</dbReference>
<dbReference type="InterPro" id="IPR050052">
    <property type="entry name" value="ATP-dep_Clp_protease_ClpX"/>
</dbReference>
<dbReference type="InterPro" id="IPR003959">
    <property type="entry name" value="ATPase_AAA_core"/>
</dbReference>
<dbReference type="InterPro" id="IPR019489">
    <property type="entry name" value="Clp_ATPase_C"/>
</dbReference>
<dbReference type="InterPro" id="IPR004487">
    <property type="entry name" value="Clp_protease_ATP-bd_su_ClpX"/>
</dbReference>
<dbReference type="InterPro" id="IPR046425">
    <property type="entry name" value="ClpX_bact"/>
</dbReference>
<dbReference type="InterPro" id="IPR027417">
    <property type="entry name" value="P-loop_NTPase"/>
</dbReference>
<dbReference type="InterPro" id="IPR010603">
    <property type="entry name" value="Znf_CppX_C4"/>
</dbReference>
<dbReference type="InterPro" id="IPR038366">
    <property type="entry name" value="Znf_CppX_C4_sf"/>
</dbReference>
<dbReference type="NCBIfam" id="TIGR00382">
    <property type="entry name" value="clpX"/>
    <property type="match status" value="1"/>
</dbReference>
<dbReference type="NCBIfam" id="NF003745">
    <property type="entry name" value="PRK05342.1"/>
    <property type="match status" value="1"/>
</dbReference>
<dbReference type="PANTHER" id="PTHR48102:SF7">
    <property type="entry name" value="ATP-DEPENDENT CLP PROTEASE ATP-BINDING SUBUNIT CLPX-LIKE, MITOCHONDRIAL"/>
    <property type="match status" value="1"/>
</dbReference>
<dbReference type="PANTHER" id="PTHR48102">
    <property type="entry name" value="ATP-DEPENDENT CLP PROTEASE ATP-BINDING SUBUNIT CLPX-LIKE, MITOCHONDRIAL-RELATED"/>
    <property type="match status" value="1"/>
</dbReference>
<dbReference type="Pfam" id="PF07724">
    <property type="entry name" value="AAA_2"/>
    <property type="match status" value="1"/>
</dbReference>
<dbReference type="Pfam" id="PF10431">
    <property type="entry name" value="ClpB_D2-small"/>
    <property type="match status" value="1"/>
</dbReference>
<dbReference type="Pfam" id="PF06689">
    <property type="entry name" value="zf-C4_ClpX"/>
    <property type="match status" value="1"/>
</dbReference>
<dbReference type="SMART" id="SM00382">
    <property type="entry name" value="AAA"/>
    <property type="match status" value="1"/>
</dbReference>
<dbReference type="SMART" id="SM01086">
    <property type="entry name" value="ClpB_D2-small"/>
    <property type="match status" value="1"/>
</dbReference>
<dbReference type="SMART" id="SM00994">
    <property type="entry name" value="zf-C4_ClpX"/>
    <property type="match status" value="1"/>
</dbReference>
<dbReference type="SUPFAM" id="SSF57716">
    <property type="entry name" value="Glucocorticoid receptor-like (DNA-binding domain)"/>
    <property type="match status" value="1"/>
</dbReference>
<dbReference type="SUPFAM" id="SSF52540">
    <property type="entry name" value="P-loop containing nucleoside triphosphate hydrolases"/>
    <property type="match status" value="1"/>
</dbReference>
<dbReference type="PROSITE" id="PS51902">
    <property type="entry name" value="CLPX_ZB"/>
    <property type="match status" value="1"/>
</dbReference>
<feature type="chain" id="PRO_1000097957" description="ATP-dependent Clp protease ATP-binding subunit ClpX">
    <location>
        <begin position="1"/>
        <end position="419"/>
    </location>
</feature>
<feature type="domain" description="ClpX-type ZB" evidence="2">
    <location>
        <begin position="1"/>
        <end position="54"/>
    </location>
</feature>
<feature type="binding site" evidence="2">
    <location>
        <position position="13"/>
    </location>
    <ligand>
        <name>Zn(2+)</name>
        <dbReference type="ChEBI" id="CHEBI:29105"/>
    </ligand>
</feature>
<feature type="binding site" evidence="2">
    <location>
        <position position="16"/>
    </location>
    <ligand>
        <name>Zn(2+)</name>
        <dbReference type="ChEBI" id="CHEBI:29105"/>
    </ligand>
</feature>
<feature type="binding site" evidence="2">
    <location>
        <position position="35"/>
    </location>
    <ligand>
        <name>Zn(2+)</name>
        <dbReference type="ChEBI" id="CHEBI:29105"/>
    </ligand>
</feature>
<feature type="binding site" evidence="2">
    <location>
        <position position="38"/>
    </location>
    <ligand>
        <name>Zn(2+)</name>
        <dbReference type="ChEBI" id="CHEBI:29105"/>
    </ligand>
</feature>
<feature type="binding site" evidence="1">
    <location>
        <begin position="119"/>
        <end position="126"/>
    </location>
    <ligand>
        <name>ATP</name>
        <dbReference type="ChEBI" id="CHEBI:30616"/>
    </ligand>
</feature>
<proteinExistence type="inferred from homology"/>
<gene>
    <name evidence="1" type="primary">clpX</name>
    <name type="ordered locus">Glov_1927</name>
</gene>
<sequence>MSRRDTSQHHLTCSFCGKSQDEVKKLIAGPAVYICDECIELCNDIIAEEIRMEDALGPDVTKLPKPKEIKEFLDEYVIGQETAKKVLSVAVYNHYKRIERPAKPGDVEMQKSNILILGPTGSGKTLLAQTLARMLKVPFAIADATNLTEAGYVGEDVENIILSLLQAADYDVERAQKGIVYIDEIDKIARKAESPSLTRDVSGEGVQQALLKIIEGTVASIPPKGGRKHPQQEFLKVDTSNILFICGGAFAGLDGVIQQRIGKKTLGFGADVKKKLEKKAGELLLQVTPEDLLKYGYIPEFIGRLPMLASLTELDEDALVQILTEPKNALTKQYQKLFDMEGVRLRFTDGALVSIAKEALKRNTGARGLRAILEGAMLDIMYEIPSQNTVREVVISEDVIYHKERPLLVYEQSASSAVA</sequence>